<keyword id="KW-0963">Cytoplasm</keyword>
<keyword id="KW-0694">RNA-binding</keyword>
<sequence>MTRYKKVIAQNKKALFNYFIEERLEAGIVLKGSEVQSLRQGKASIEESYAGDTGHELFLYNCHIAEYEKANKFNHATRRPRKLLLHTKEMKKIIGKIKIKGYTLVALSMYFNKKNKVKVELGLAKGKKLYDKRESIKEKDWQRDQSRLIRQK</sequence>
<dbReference type="EMBL" id="CP000409">
    <property type="protein sequence ID" value="ABV73576.1"/>
    <property type="molecule type" value="Genomic_DNA"/>
</dbReference>
<dbReference type="RefSeq" id="WP_012148772.1">
    <property type="nucleotide sequence ID" value="NC_009879.1"/>
</dbReference>
<dbReference type="SMR" id="A8EYZ3"/>
<dbReference type="STRING" id="293613.A1E_03205"/>
<dbReference type="KEGG" id="rcm:A1E_03205"/>
<dbReference type="eggNOG" id="COG0691">
    <property type="taxonomic scope" value="Bacteria"/>
</dbReference>
<dbReference type="HOGENOM" id="CLU_108953_0_1_5"/>
<dbReference type="Proteomes" id="UP000007056">
    <property type="component" value="Chromosome"/>
</dbReference>
<dbReference type="GO" id="GO:0005829">
    <property type="term" value="C:cytosol"/>
    <property type="evidence" value="ECO:0007669"/>
    <property type="project" value="TreeGrafter"/>
</dbReference>
<dbReference type="GO" id="GO:0003723">
    <property type="term" value="F:RNA binding"/>
    <property type="evidence" value="ECO:0007669"/>
    <property type="project" value="UniProtKB-UniRule"/>
</dbReference>
<dbReference type="GO" id="GO:0070929">
    <property type="term" value="P:trans-translation"/>
    <property type="evidence" value="ECO:0007669"/>
    <property type="project" value="UniProtKB-UniRule"/>
</dbReference>
<dbReference type="CDD" id="cd09294">
    <property type="entry name" value="SmpB"/>
    <property type="match status" value="1"/>
</dbReference>
<dbReference type="Gene3D" id="2.40.280.10">
    <property type="match status" value="1"/>
</dbReference>
<dbReference type="HAMAP" id="MF_00023">
    <property type="entry name" value="SmpB"/>
    <property type="match status" value="1"/>
</dbReference>
<dbReference type="InterPro" id="IPR023620">
    <property type="entry name" value="SmpB"/>
</dbReference>
<dbReference type="InterPro" id="IPR000037">
    <property type="entry name" value="SsrA-bd_prot"/>
</dbReference>
<dbReference type="InterPro" id="IPR020081">
    <property type="entry name" value="SsrA-bd_prot_CS"/>
</dbReference>
<dbReference type="NCBIfam" id="NF003843">
    <property type="entry name" value="PRK05422.1"/>
    <property type="match status" value="1"/>
</dbReference>
<dbReference type="NCBIfam" id="TIGR00086">
    <property type="entry name" value="smpB"/>
    <property type="match status" value="1"/>
</dbReference>
<dbReference type="PANTHER" id="PTHR30308:SF2">
    <property type="entry name" value="SSRA-BINDING PROTEIN"/>
    <property type="match status" value="1"/>
</dbReference>
<dbReference type="PANTHER" id="PTHR30308">
    <property type="entry name" value="TMRNA-BINDING COMPONENT OF TRANS-TRANSLATION TAGGING COMPLEX"/>
    <property type="match status" value="1"/>
</dbReference>
<dbReference type="Pfam" id="PF01668">
    <property type="entry name" value="SmpB"/>
    <property type="match status" value="1"/>
</dbReference>
<dbReference type="SUPFAM" id="SSF74982">
    <property type="entry name" value="Small protein B (SmpB)"/>
    <property type="match status" value="1"/>
</dbReference>
<dbReference type="PROSITE" id="PS01317">
    <property type="entry name" value="SSRP"/>
    <property type="match status" value="1"/>
</dbReference>
<comment type="function">
    <text evidence="1">Required for rescue of stalled ribosomes mediated by trans-translation. Binds to transfer-messenger RNA (tmRNA), required for stable association of tmRNA with ribosomes. tmRNA and SmpB together mimic tRNA shape, replacing the anticodon stem-loop with SmpB. tmRNA is encoded by the ssrA gene; the 2 termini fold to resemble tRNA(Ala) and it encodes a 'tag peptide', a short internal open reading frame. During trans-translation Ala-aminoacylated tmRNA acts like a tRNA, entering the A-site of stalled ribosomes, displacing the stalled mRNA. The ribosome then switches to translate the ORF on the tmRNA; the nascent peptide is terminated with the 'tag peptide' encoded by the tmRNA and targeted for degradation. The ribosome is freed to recommence translation, which seems to be the essential function of trans-translation.</text>
</comment>
<comment type="subcellular location">
    <subcellularLocation>
        <location evidence="1">Cytoplasm</location>
    </subcellularLocation>
    <text evidence="1">The tmRNA-SmpB complex associates with stalled 70S ribosomes.</text>
</comment>
<comment type="similarity">
    <text evidence="1">Belongs to the SmpB family.</text>
</comment>
<proteinExistence type="inferred from homology"/>
<gene>
    <name evidence="1" type="primary">smpB</name>
    <name type="ordered locus">A1E_03205</name>
</gene>
<evidence type="ECO:0000255" key="1">
    <source>
        <dbReference type="HAMAP-Rule" id="MF_00023"/>
    </source>
</evidence>
<reference key="1">
    <citation type="submission" date="2007-09" db="EMBL/GenBank/DDBJ databases">
        <title>Complete genome sequence of Rickettsia canadensis.</title>
        <authorList>
            <person name="Madan A."/>
            <person name="Fahey J."/>
            <person name="Helton E."/>
            <person name="Ketteman M."/>
            <person name="Madan A."/>
            <person name="Rodrigues S."/>
            <person name="Sanchez A."/>
            <person name="Whiting M."/>
            <person name="Dasch G."/>
            <person name="Eremeeva M."/>
        </authorList>
    </citation>
    <scope>NUCLEOTIDE SEQUENCE [LARGE SCALE GENOMIC DNA]</scope>
    <source>
        <strain>McKiel</strain>
    </source>
</reference>
<feature type="chain" id="PRO_1000002130" description="SsrA-binding protein">
    <location>
        <begin position="1"/>
        <end position="152"/>
    </location>
</feature>
<organism>
    <name type="scientific">Rickettsia canadensis (strain McKiel)</name>
    <dbReference type="NCBI Taxonomy" id="293613"/>
    <lineage>
        <taxon>Bacteria</taxon>
        <taxon>Pseudomonadati</taxon>
        <taxon>Pseudomonadota</taxon>
        <taxon>Alphaproteobacteria</taxon>
        <taxon>Rickettsiales</taxon>
        <taxon>Rickettsiaceae</taxon>
        <taxon>Rickettsieae</taxon>
        <taxon>Rickettsia</taxon>
        <taxon>belli group</taxon>
    </lineage>
</organism>
<name>SSRP_RICCK</name>
<accession>A8EYZ3</accession>
<protein>
    <recommendedName>
        <fullName evidence="1">SsrA-binding protein</fullName>
    </recommendedName>
    <alternativeName>
        <fullName evidence="1">Small protein B</fullName>
    </alternativeName>
</protein>